<feature type="chain" id="PRO_0000323713" description="Isocitrate dehydrogenase [NADP]">
    <location>
        <begin position="1"/>
        <end position="427"/>
    </location>
</feature>
<feature type="binding site" evidence="1">
    <location>
        <position position="114"/>
    </location>
    <ligand>
        <name>NADP(+)</name>
        <dbReference type="ChEBI" id="CHEBI:58349"/>
    </ligand>
</feature>
<feature type="binding site" evidence="1">
    <location>
        <position position="123"/>
    </location>
    <ligand>
        <name>D-threo-isocitrate</name>
        <dbReference type="ChEBI" id="CHEBI:15562"/>
    </ligand>
</feature>
<feature type="binding site" evidence="1">
    <location>
        <position position="125"/>
    </location>
    <ligand>
        <name>D-threo-isocitrate</name>
        <dbReference type="ChEBI" id="CHEBI:15562"/>
    </ligand>
</feature>
<feature type="binding site" evidence="1">
    <location>
        <position position="129"/>
    </location>
    <ligand>
        <name>D-threo-isocitrate</name>
        <dbReference type="ChEBI" id="CHEBI:15562"/>
    </ligand>
</feature>
<feature type="binding site" evidence="1">
    <location>
        <position position="139"/>
    </location>
    <ligand>
        <name>D-threo-isocitrate</name>
        <dbReference type="ChEBI" id="CHEBI:15562"/>
    </ligand>
</feature>
<feature type="binding site" evidence="1">
    <location>
        <position position="163"/>
    </location>
    <ligand>
        <name>D-threo-isocitrate</name>
        <dbReference type="ChEBI" id="CHEBI:15562"/>
    </ligand>
</feature>
<feature type="binding site" evidence="1">
    <location>
        <position position="317"/>
    </location>
    <ligand>
        <name>Mg(2+)</name>
        <dbReference type="ChEBI" id="CHEBI:18420"/>
    </ligand>
</feature>
<feature type="binding site" evidence="1">
    <location>
        <begin position="349"/>
        <end position="355"/>
    </location>
    <ligand>
        <name>NADP(+)</name>
        <dbReference type="ChEBI" id="CHEBI:58349"/>
    </ligand>
</feature>
<feature type="binding site" evidence="1">
    <location>
        <position position="362"/>
    </location>
    <ligand>
        <name>NADP(+)</name>
        <dbReference type="ChEBI" id="CHEBI:58349"/>
    </ligand>
</feature>
<feature type="binding site" evidence="1">
    <location>
        <position position="401"/>
    </location>
    <ligand>
        <name>NADP(+)</name>
        <dbReference type="ChEBI" id="CHEBI:58349"/>
    </ligand>
</feature>
<feature type="binding site" evidence="1">
    <location>
        <position position="405"/>
    </location>
    <ligand>
        <name>NADP(+)</name>
        <dbReference type="ChEBI" id="CHEBI:58349"/>
    </ligand>
</feature>
<feature type="site" description="Critical for catalysis" evidence="1">
    <location>
        <position position="170"/>
    </location>
</feature>
<feature type="site" description="Critical for catalysis" evidence="1">
    <location>
        <position position="240"/>
    </location>
</feature>
<feature type="sequence variant" description="In strain: GQ212, KoQ229, SQ217.">
    <original>Q</original>
    <variation>E</variation>
    <location>
        <position position="20"/>
    </location>
</feature>
<feature type="sequence variant" description="In strain: TK-1.">
    <original>E</original>
    <variation>V</variation>
    <location>
        <position position="32"/>
    </location>
</feature>
<feature type="sequence variant" description="In strain: GQ212.">
    <original>V</original>
    <variation>A</variation>
    <location>
        <position position="33"/>
    </location>
</feature>
<feature type="sequence variant" description="In strain: GQ212, KoQ229, MAN, ME, Priscilla, SQ217.">
    <original>A</original>
    <variation>T</variation>
    <location>
        <position position="52"/>
    </location>
</feature>
<feature type="sequence variant" description="In strain: ME.">
    <original>V</original>
    <variation>A</variation>
    <location>
        <position position="63"/>
    </location>
</feature>
<feature type="sequence variant" description="In strain: SQ217.">
    <original>V</original>
    <variation>A</variation>
    <location>
        <position position="87"/>
    </location>
</feature>
<feature type="sequence variant" description="In strain: California 76 VR 614.">
    <original>E</original>
    <variation>G</variation>
    <location>
        <position position="100"/>
    </location>
</feature>
<feature type="sequence variant" description="In strain: 605.">
    <original>E</original>
    <variation>G</variation>
    <location>
        <position position="104"/>
    </location>
</feature>
<feature type="sequence variant" description="In strain: Priscilla.">
    <original>V</original>
    <variation>M</variation>
    <location>
        <position position="183"/>
    </location>
</feature>
<feature type="sequence variant" description="In strain: Bangui VR 730.">
    <original>G</original>
    <variation>R</variation>
    <location>
        <position position="271"/>
    </location>
</feature>
<feature type="sequence variant" description="In strain: Bangui VR 730.">
    <original>Y</original>
    <variation>C</variation>
    <location>
        <position position="306"/>
    </location>
</feature>
<feature type="sequence variant" description="In strain: El Tayeb RSA 342.">
    <original>W</original>
    <variation>R</variation>
    <location>
        <position position="379"/>
    </location>
</feature>
<feature type="sequence variant" description="In strain: GQ212, KoQ229, SQ217.">
    <original>T</original>
    <variation>A</variation>
    <location>
        <position position="415"/>
    </location>
</feature>
<feature type="sequence variant" description="In strain: GQ212, KoQ229, SQ217.">
    <original>G</original>
    <variation>A</variation>
    <location>
        <position position="419"/>
    </location>
</feature>
<comment type="function">
    <text evidence="1">Catalyzes the oxidative decarboxylation of isocitrate to 2-oxoglutarate and carbon dioxide with the concomitant reduction of NADP(+).</text>
</comment>
<comment type="catalytic activity">
    <reaction evidence="1">
        <text>D-threo-isocitrate + NADP(+) = 2-oxoglutarate + CO2 + NADPH</text>
        <dbReference type="Rhea" id="RHEA:19629"/>
        <dbReference type="ChEBI" id="CHEBI:15562"/>
        <dbReference type="ChEBI" id="CHEBI:16526"/>
        <dbReference type="ChEBI" id="CHEBI:16810"/>
        <dbReference type="ChEBI" id="CHEBI:57783"/>
        <dbReference type="ChEBI" id="CHEBI:58349"/>
        <dbReference type="EC" id="1.1.1.42"/>
    </reaction>
</comment>
<comment type="cofactor">
    <cofactor evidence="1">
        <name>Mg(2+)</name>
        <dbReference type="ChEBI" id="CHEBI:18420"/>
    </cofactor>
    <cofactor evidence="1">
        <name>Mn(2+)</name>
        <dbReference type="ChEBI" id="CHEBI:29035"/>
    </cofactor>
    <text evidence="1">Binds 1 Mg(2+) or Mn(2+) ion per subunit.</text>
</comment>
<comment type="biophysicochemical properties">
    <phDependence>
        <text evidence="2">Optimum pH is 6.5-7.7.</text>
    </phDependence>
</comment>
<comment type="subunit">
    <text evidence="1">Homodimer.</text>
</comment>
<comment type="developmental stage">
    <text evidence="3">Detected in both the small cell variant (SCV) and in the large cell variant (LCV) stage (at protein level). LCVs are more metabolically active than SCVs.</text>
</comment>
<comment type="similarity">
    <text evidence="4">Belongs to the isocitrate and isopropylmalate dehydrogenases family.</text>
</comment>
<comment type="sequence caution" evidence="4">
    <conflict type="erroneous initiation">
        <sequence resource="EMBL-CDS" id="AAO90709"/>
    </conflict>
</comment>
<evidence type="ECO:0000250" key="1">
    <source>
        <dbReference type="UniProtKB" id="P08200"/>
    </source>
</evidence>
<evidence type="ECO:0000269" key="2">
    <source>
    </source>
</evidence>
<evidence type="ECO:0000269" key="3">
    <source>
    </source>
</evidence>
<evidence type="ECO:0000305" key="4"/>
<reference key="1">
    <citation type="journal article" date="1999" name="FEMS Microbiol. Lett.">
        <title>Molecular cloning of an immunogenic and acid-induced isocitrate dehydrogenase gene from Coxiella burnetii.</title>
        <authorList>
            <person name="Van Nguyen S."/>
            <person name="To H."/>
            <person name="Yamaguchi T."/>
            <person name="Fukushi H."/>
            <person name="Hirai K."/>
        </authorList>
    </citation>
    <scope>NUCLEOTIDE SEQUENCE [GENOMIC DNA]</scope>
    <scope>OPTIMAL PH</scope>
    <source>
        <strain>Nine Mile I</strain>
    </source>
</reference>
<reference key="2">
    <citation type="journal article" date="1999" name="FEMS Microbiol. Lett.">
        <title>Differentiation of Coxiella burnetii isolates by sequence determination and PCR-restriction fragment length polymorphism analysis of isocitrate dehydrogenase gene.</title>
        <authorList>
            <person name="Nguyen S.V."/>
            <person name="Hirai K."/>
        </authorList>
    </citation>
    <scope>NUCLEOTIDE SEQUENCE [GENOMIC DNA]</scope>
    <source>
        <strain>1M</strain>
        <strain>27M</strain>
        <strain>307</strain>
        <strain>3M</strain>
        <strain>605</strain>
        <strain>60M</strain>
        <strain>82M</strain>
        <strain>Bangui VR 730</strain>
        <strain>El Tayeb RSA 342</strain>
        <strain>GQ212</strain>
        <strain>KoQ229</strain>
        <strain>MAN</strain>
        <strain>ME</strain>
        <strain>Ohio 314 VR 542</strain>
        <strain>Priscilla</strain>
        <strain>SQ217</strain>
        <strain>TK-1</strain>
    </source>
</reference>
<reference key="3">
    <citation type="journal article" date="2003" name="Proc. Natl. Acad. Sci. U.S.A.">
        <title>Complete genome sequence of the Q-fever pathogen, Coxiella burnetii.</title>
        <authorList>
            <person name="Seshadri R."/>
            <person name="Paulsen I.T."/>
            <person name="Eisen J.A."/>
            <person name="Read T.D."/>
            <person name="Nelson K.E."/>
            <person name="Nelson W.C."/>
            <person name="Ward N.L."/>
            <person name="Tettelin H."/>
            <person name="Davidsen T.M."/>
            <person name="Beanan M.J."/>
            <person name="DeBoy R.T."/>
            <person name="Daugherty S.C."/>
            <person name="Brinkac L.M."/>
            <person name="Madupu R."/>
            <person name="Dodson R.J."/>
            <person name="Khouri H.M."/>
            <person name="Lee K.H."/>
            <person name="Carty H.A."/>
            <person name="Scanlan D."/>
            <person name="Heinzen R.A."/>
            <person name="Thompson H.A."/>
            <person name="Samuel J.E."/>
            <person name="Fraser C.M."/>
            <person name="Heidelberg J.F."/>
        </authorList>
    </citation>
    <scope>NUCLEOTIDE SEQUENCE [LARGE SCALE GENOMIC DNA]</scope>
    <source>
        <strain>RSA 493 / Nine Mile phase I</strain>
    </source>
</reference>
<reference key="4">
    <citation type="journal article" date="2007" name="Infect. Immun.">
        <title>Proteome and antigen profiling of Coxiella burnetii developmental forms.</title>
        <authorList>
            <person name="Coleman S.A."/>
            <person name="Fischer E.R."/>
            <person name="Cockrell D.C."/>
            <person name="Voth D.E."/>
            <person name="Howe D."/>
            <person name="Mead D.J."/>
            <person name="Samuel J.E."/>
            <person name="Heinzen R.A."/>
        </authorList>
    </citation>
    <scope>IDENTIFICATION BY MASS SPECTROMETRY</scope>
    <scope>DEVELOPMENTAL STAGE</scope>
    <source>
        <strain>Nine Mile Crazy / RSA 514</strain>
    </source>
</reference>
<protein>
    <recommendedName>
        <fullName>Isocitrate dehydrogenase [NADP]</fullName>
        <shortName>IDH</shortName>
        <ecNumber evidence="1">1.1.1.42</ecNumber>
    </recommendedName>
    <alternativeName>
        <fullName>IDP</fullName>
    </alternativeName>
    <alternativeName>
        <fullName>NADP(+)-specific ICDH</fullName>
    </alternativeName>
    <alternativeName>
        <fullName>Oxalosuccinate decarboxylase</fullName>
    </alternativeName>
</protein>
<sequence>MTELTGVSIVTYQHIKVPSQGEKITVNKAVLEVPDRPIIPFIEGDGIGIDIAPVMKNVVDAAVEKSYAGKRKIEWMEIYAGEKATKVYGKDNWLPDETLEAIKEYQVAIKGPLTTPVGGGIRSLNVALRQQLDLYVCLRPVRYFTGVPSPVKTPEKVNMVIFRENSEDIYAGIEWPAGSPEAVKLINFLQNEMGVKKIRFPETAGIGIKPVSKEGTSRLVRRAIQYAIDNDRDSVTLVHKGNIMKFTEGAFKDWGYEVAVKEFGAKPLDGGPWHVFENPKTGQKITIKDVIADAFLQQILLRPAEYSVIATLNLNGDYISDALAAEVGGIGIAPGANLSDTVGLFEATHGTAPKYAGQDKVNPGSLILSAEMMLRYLGWKEAADLVVQGIEGAIESKTVTYDFARLMTGAKEVSTSQFGKAIIKHIL</sequence>
<organism>
    <name type="scientific">Coxiella burnetii (strain RSA 493 / Nine Mile phase I)</name>
    <dbReference type="NCBI Taxonomy" id="227377"/>
    <lineage>
        <taxon>Bacteria</taxon>
        <taxon>Pseudomonadati</taxon>
        <taxon>Pseudomonadota</taxon>
        <taxon>Gammaproteobacteria</taxon>
        <taxon>Legionellales</taxon>
        <taxon>Coxiellaceae</taxon>
        <taxon>Coxiella</taxon>
    </lineage>
</organism>
<gene>
    <name type="primary">icd</name>
    <name type="ordered locus">CBU_1200</name>
</gene>
<name>IDH_COXBU</name>
<proteinExistence type="evidence at protein level"/>
<accession>Q9ZH99</accession>
<accession>Q7C3F6</accession>
<accession>Q9RG62</accession>
<accession>Q9RG63</accession>
<accession>Q9RG64</accession>
<accession>Q9RG65</accession>
<accession>Q9RG66</accession>
<accession>Q9RG67</accession>
<accession>Q9RG68</accession>
<accession>Q9RG69</accession>
<accession>Q9RG70</accession>
<accession>Q9RG71</accession>
<accession>Q9RG72</accession>
<dbReference type="EC" id="1.1.1.42" evidence="1"/>
<dbReference type="EMBL" id="AF069035">
    <property type="protein sequence ID" value="AAC68600.1"/>
    <property type="molecule type" value="Genomic_DNA"/>
</dbReference>
<dbReference type="EMBL" id="AF146284">
    <property type="protein sequence ID" value="AAF16725.1"/>
    <property type="molecule type" value="Genomic_DNA"/>
</dbReference>
<dbReference type="EMBL" id="AF146285">
    <property type="protein sequence ID" value="AAF16726.1"/>
    <property type="molecule type" value="Genomic_DNA"/>
</dbReference>
<dbReference type="EMBL" id="AF146286">
    <property type="protein sequence ID" value="AAF16727.1"/>
    <property type="molecule type" value="Genomic_DNA"/>
</dbReference>
<dbReference type="EMBL" id="AF146287">
    <property type="protein sequence ID" value="AAF16728.1"/>
    <property type="molecule type" value="Genomic_DNA"/>
</dbReference>
<dbReference type="EMBL" id="AF146288">
    <property type="protein sequence ID" value="AAF16729.1"/>
    <property type="molecule type" value="Genomic_DNA"/>
</dbReference>
<dbReference type="EMBL" id="AF146289">
    <property type="protein sequence ID" value="AAF16730.1"/>
    <property type="molecule type" value="Genomic_DNA"/>
</dbReference>
<dbReference type="EMBL" id="AF146290">
    <property type="protein sequence ID" value="AAF16731.1"/>
    <property type="molecule type" value="Genomic_DNA"/>
</dbReference>
<dbReference type="EMBL" id="AF146291">
    <property type="protein sequence ID" value="AAF16732.1"/>
    <property type="molecule type" value="Genomic_DNA"/>
</dbReference>
<dbReference type="EMBL" id="AF146292">
    <property type="protein sequence ID" value="AAF16733.1"/>
    <property type="molecule type" value="Genomic_DNA"/>
</dbReference>
<dbReference type="EMBL" id="AF146293">
    <property type="protein sequence ID" value="AAF16734.1"/>
    <property type="molecule type" value="Genomic_DNA"/>
</dbReference>
<dbReference type="EMBL" id="AF146294">
    <property type="protein sequence ID" value="AAF16735.1"/>
    <property type="molecule type" value="Genomic_DNA"/>
</dbReference>
<dbReference type="EMBL" id="AF146295">
    <property type="protein sequence ID" value="AAF16736.1"/>
    <property type="molecule type" value="Genomic_DNA"/>
</dbReference>
<dbReference type="EMBL" id="AF146296">
    <property type="protein sequence ID" value="AAF16737.1"/>
    <property type="molecule type" value="Genomic_DNA"/>
</dbReference>
<dbReference type="EMBL" id="AF146297">
    <property type="protein sequence ID" value="AAF16738.1"/>
    <property type="molecule type" value="Genomic_DNA"/>
</dbReference>
<dbReference type="EMBL" id="AF146298">
    <property type="protein sequence ID" value="AAF16739.1"/>
    <property type="molecule type" value="Genomic_DNA"/>
</dbReference>
<dbReference type="EMBL" id="AF146299">
    <property type="protein sequence ID" value="AAF16740.1"/>
    <property type="molecule type" value="Genomic_DNA"/>
</dbReference>
<dbReference type="EMBL" id="AF146300">
    <property type="protein sequence ID" value="AAF16741.1"/>
    <property type="molecule type" value="Genomic_DNA"/>
</dbReference>
<dbReference type="EMBL" id="AF146301">
    <property type="protein sequence ID" value="AAF16742.1"/>
    <property type="molecule type" value="Genomic_DNA"/>
</dbReference>
<dbReference type="EMBL" id="AE016828">
    <property type="protein sequence ID" value="AAO90709.2"/>
    <property type="status" value="ALT_INIT"/>
    <property type="molecule type" value="Genomic_DNA"/>
</dbReference>
<dbReference type="RefSeq" id="NP_820195.3">
    <property type="nucleotide sequence ID" value="NC_002971.4"/>
</dbReference>
<dbReference type="RefSeq" id="WP_078068420.1">
    <property type="nucleotide sequence ID" value="NC_002971.4"/>
</dbReference>
<dbReference type="SMR" id="Q9ZH99"/>
<dbReference type="STRING" id="227377.CBU_1200"/>
<dbReference type="EnsemblBacteria" id="AAO90709">
    <property type="protein sequence ID" value="AAO90709"/>
    <property type="gene ID" value="CBU_1200"/>
</dbReference>
<dbReference type="GeneID" id="1209104"/>
<dbReference type="KEGG" id="cbu:CBU_1200"/>
<dbReference type="PATRIC" id="fig|227377.7.peg.1195"/>
<dbReference type="eggNOG" id="COG0538">
    <property type="taxonomic scope" value="Bacteria"/>
</dbReference>
<dbReference type="HOGENOM" id="CLU_031953_7_1_6"/>
<dbReference type="OrthoDB" id="9806254at2"/>
<dbReference type="Proteomes" id="UP000002671">
    <property type="component" value="Chromosome"/>
</dbReference>
<dbReference type="GO" id="GO:0004450">
    <property type="term" value="F:isocitrate dehydrogenase (NADP+) activity"/>
    <property type="evidence" value="ECO:0007669"/>
    <property type="project" value="UniProtKB-EC"/>
</dbReference>
<dbReference type="GO" id="GO:0000287">
    <property type="term" value="F:magnesium ion binding"/>
    <property type="evidence" value="ECO:0007669"/>
    <property type="project" value="InterPro"/>
</dbReference>
<dbReference type="GO" id="GO:0051287">
    <property type="term" value="F:NAD binding"/>
    <property type="evidence" value="ECO:0007669"/>
    <property type="project" value="InterPro"/>
</dbReference>
<dbReference type="GO" id="GO:0006097">
    <property type="term" value="P:glyoxylate cycle"/>
    <property type="evidence" value="ECO:0007669"/>
    <property type="project" value="UniProtKB-KW"/>
</dbReference>
<dbReference type="GO" id="GO:0006099">
    <property type="term" value="P:tricarboxylic acid cycle"/>
    <property type="evidence" value="ECO:0007669"/>
    <property type="project" value="UniProtKB-KW"/>
</dbReference>
<dbReference type="Gene3D" id="3.40.718.10">
    <property type="entry name" value="Isopropylmalate Dehydrogenase"/>
    <property type="match status" value="1"/>
</dbReference>
<dbReference type="InterPro" id="IPR019818">
    <property type="entry name" value="IsoCit/isopropylmalate_DH_CS"/>
</dbReference>
<dbReference type="InterPro" id="IPR004439">
    <property type="entry name" value="Isocitrate_DH_NADP_dimer_prok"/>
</dbReference>
<dbReference type="InterPro" id="IPR024084">
    <property type="entry name" value="IsoPropMal-DH-like_dom"/>
</dbReference>
<dbReference type="NCBIfam" id="NF005425">
    <property type="entry name" value="PRK07006.1"/>
    <property type="match status" value="1"/>
</dbReference>
<dbReference type="NCBIfam" id="TIGR00183">
    <property type="entry name" value="prok_nadp_idh"/>
    <property type="match status" value="1"/>
</dbReference>
<dbReference type="PANTHER" id="PTHR43504">
    <property type="entry name" value="ISOCITRATE DEHYDROGENASE [NADP]"/>
    <property type="match status" value="1"/>
</dbReference>
<dbReference type="PANTHER" id="PTHR43504:SF1">
    <property type="entry name" value="ISOCITRATE DEHYDROGENASE [NADP]"/>
    <property type="match status" value="1"/>
</dbReference>
<dbReference type="Pfam" id="PF00180">
    <property type="entry name" value="Iso_dh"/>
    <property type="match status" value="1"/>
</dbReference>
<dbReference type="SMART" id="SM01329">
    <property type="entry name" value="Iso_dh"/>
    <property type="match status" value="1"/>
</dbReference>
<dbReference type="SUPFAM" id="SSF53659">
    <property type="entry name" value="Isocitrate/Isopropylmalate dehydrogenase-like"/>
    <property type="match status" value="1"/>
</dbReference>
<dbReference type="PROSITE" id="PS00470">
    <property type="entry name" value="IDH_IMDH"/>
    <property type="match status" value="1"/>
</dbReference>
<keyword id="KW-0329">Glyoxylate bypass</keyword>
<keyword id="KW-0460">Magnesium</keyword>
<keyword id="KW-0464">Manganese</keyword>
<keyword id="KW-0479">Metal-binding</keyword>
<keyword id="KW-0521">NADP</keyword>
<keyword id="KW-0560">Oxidoreductase</keyword>
<keyword id="KW-1185">Reference proteome</keyword>
<keyword id="KW-0816">Tricarboxylic acid cycle</keyword>